<proteinExistence type="evidence at protein level"/>
<evidence type="ECO:0000250" key="1">
    <source>
        <dbReference type="UniProtKB" id="P03261"/>
    </source>
</evidence>
<evidence type="ECO:0000255" key="2">
    <source>
        <dbReference type="HAMAP-Rule" id="MF_04055"/>
    </source>
</evidence>
<evidence type="ECO:0000256" key="3">
    <source>
        <dbReference type="SAM" id="MobiDB-lite"/>
    </source>
</evidence>
<evidence type="ECO:0000269" key="4">
    <source>
    </source>
</evidence>
<evidence type="ECO:0000269" key="5">
    <source>
    </source>
</evidence>
<evidence type="ECO:0000269" key="6">
    <source>
    </source>
</evidence>
<evidence type="ECO:0000305" key="7"/>
<evidence type="ECO:0000305" key="8">
    <source>
    </source>
</evidence>
<reference key="1">
    <citation type="journal article" date="1984" name="Gene">
        <title>The nucleotide sequence of fragment HindIII-C of human adenovirus type 5 DNA (map positions 17.1-31.7).</title>
        <authorList>
            <person name="Dekker B.M.M."/>
            <person name="van Ormondt H."/>
        </authorList>
    </citation>
    <scope>NUCLEOTIDE SEQUENCE [GENOMIC DNA]</scope>
</reference>
<reference key="2">
    <citation type="journal article" date="1992" name="Virology">
        <title>The sequence of the genome of adenovirus type 5 and its comparison with the genome of adenovirus type 2.</title>
        <authorList>
            <person name="Chroboczek J."/>
            <person name="Bieber F."/>
            <person name="Jacrot B."/>
        </authorList>
    </citation>
    <scope>NUCLEOTIDE SEQUENCE [LARGE SCALE GENOMIC DNA]</scope>
</reference>
<reference key="3">
    <citation type="journal article" date="2006" name="Genome Res.">
        <title>Broad-spectrum respiratory tract pathogen identification using resequencing DNA microarrays.</title>
        <authorList>
            <person name="Lin B."/>
            <person name="Wang Z."/>
            <person name="Vora G.J."/>
            <person name="Thornton J.A."/>
            <person name="Schnur J.M."/>
            <person name="Thach D.C."/>
            <person name="Blaney K.M."/>
            <person name="Ligler A.G."/>
            <person name="Malanoski A.P."/>
            <person name="Santiago J."/>
            <person name="Walter E.A."/>
            <person name="Agan B.K."/>
            <person name="Metzgar D."/>
            <person name="Seto D."/>
            <person name="Daum L.T."/>
            <person name="Kruzelock R."/>
            <person name="Rowley R.K."/>
            <person name="Hanson E.H."/>
            <person name="Tibbetts C."/>
            <person name="Stenger D.A."/>
        </authorList>
    </citation>
    <scope>NUCLEOTIDE SEQUENCE [LARGE SCALE GENOMIC DNA]</scope>
    <source>
        <strain>NHRC Ad5FS 7151</strain>
    </source>
</reference>
<reference key="4">
    <citation type="journal article" date="1990" name="J. Biol. Chem.">
        <title>Protein-protein interactions between adenovirus DNA polymerase and nuclear factor I mediate formation of the DNA replication preinitiation complex.</title>
        <authorList>
            <person name="Chen M."/>
            <person name="Mermod N."/>
            <person name="Horwitz M.S."/>
        </authorList>
    </citation>
    <scope>INTERACTION WITH HOST NFIA</scope>
</reference>
<reference key="5">
    <citation type="journal article" date="2003" name="Curr. Top. Microbiol. Immunol.">
        <title>Adenovirus DNA replication.</title>
        <authorList>
            <person name="Liu H."/>
            <person name="Naismith J.H."/>
            <person name="Hay R.T."/>
        </authorList>
    </citation>
    <scope>FUNCTION</scope>
    <scope>IDENTIFICATION IN THE INITIATION COMPLEX</scope>
</reference>
<reference key="6">
    <citation type="journal article" date="2004" name="Nucleic Acids Res.">
        <title>The adenovirus priming protein pTP contributes to the kinetics of initiation of DNA replication.</title>
        <authorList>
            <person name="Mysiak M.E."/>
            <person name="Holthuizen P.E."/>
            <person name="van der Vliet P.C."/>
        </authorList>
    </citation>
    <scope>FUNCTION</scope>
    <scope>INTERACTION WITH THE TERMINAL PROTEIN</scope>
</reference>
<gene>
    <name evidence="2" type="primary">POL</name>
</gene>
<organismHost>
    <name type="scientific">Homo sapiens</name>
    <name type="common">Human</name>
    <dbReference type="NCBI Taxonomy" id="9606"/>
</organismHost>
<protein>
    <recommendedName>
        <fullName evidence="2">DNA polymerase</fullName>
        <ecNumber evidence="2">2.7.7.7</ecNumber>
    </recommendedName>
</protein>
<keyword id="KW-0235">DNA replication</keyword>
<keyword id="KW-0238">DNA-binding</keyword>
<keyword id="KW-0239">DNA-directed DNA polymerase</keyword>
<keyword id="KW-1048">Host nucleus</keyword>
<keyword id="KW-0548">Nucleotidyltransferase</keyword>
<keyword id="KW-1185">Reference proteome</keyword>
<keyword id="KW-0808">Transferase</keyword>
<keyword id="KW-1194">Viral DNA replication</keyword>
<name>DPOL_ADE05</name>
<accession>P04495</accession>
<accession>Q2KS23</accession>
<organism>
    <name type="scientific">Human adenovirus C serotype 5</name>
    <name type="common">HAdV-5</name>
    <name type="synonym">Human adenovirus 5</name>
    <dbReference type="NCBI Taxonomy" id="28285"/>
    <lineage>
        <taxon>Viruses</taxon>
        <taxon>Varidnaviria</taxon>
        <taxon>Bamfordvirae</taxon>
        <taxon>Preplasmiviricota</taxon>
        <taxon>Tectiliviricetes</taxon>
        <taxon>Rowavirales</taxon>
        <taxon>Adenoviridae</taxon>
        <taxon>Mastadenovirus</taxon>
        <taxon>Human mastadenovirus C</taxon>
    </lineage>
</organism>
<sequence>MALVQAHRARRLHAEAPDSGDQPPRRRVRQQPTRAAPAPARARRRRAPAPSPGGSGAPPTSGGSPASPLLDASSKDTPAAHRPPRGTVVAPRGCGLLQAIDAATNQPLEIRYHLDLARALTRLCEVNLQELPPDLTPRELQTMDSSHLRDVVIKLRPPRADIWTLGSRGVVVRSTVTPLEQPDGQGQAAEVEDHQPNPPGEGLKFPLCFLVRGRQVNLVQDVQPVHRCQYCARFYKSQHECSARRRDFYFHHINSHSSNWWREIQFFPIGSHPRTERLFVTYDVETYTWMGAFGKQLVPFMLVMKFGGDEPLVTAARDLAANLGWDRWEQDPLTFYCITPEKMAIGRQFRTFRDHLQMLMARDLWSSFVASNPHLADWALSEHGLSSPEELTYEELKKLPSIKGIPRFLELYIVGHNINGFDEIVLAAQVINNRSEVPGPFRITRNFMPRAGKILFNDVTFALPNPRSKKRTDFLLWEQGGCDDTDFKYQYLKVMVRDTFALTHTSLRKAAQAYALPVEKGCCAYQAVNQFYMLGSYRSEADGFPIQEYWKDREEFVLNRELWKKKGQDKYDIIKETLDYCALDVQVTAELVNKLRDSYASFVRDAVGLTDASFNVFQRPTISSNSHAIFRQIVFRAEQPARSNLGPDLLAPSHELYDYVRASIRGGRCYPTYLGILREPLYVYDICGMYASALTHPMPWGPPLNPYERALAARAWQQALDLQGCKIDYFDARLLPGVFTVDADPPDETQLDPLPPFCSRKGGRLCWTNERLRGEVATSVDLVTLHNRGWRVHLVPDERTTVFPEWRCVAREYVQLNIAAKERADRDKNQTLRSIAKLLSNALYGSFATKLDNKKIVFSDQMDAATLKGITAGQVNIKSSSFLETDNLSAEVMPAFQREYSPQQLALADSDAEESEDERAPTPFYSPPSGTPGHVAYTYKPITFLDAEEGDMCLHTLERVDPLVDNDRYPSHLASFVLAWTRAFVSEWSEFLYEEDRGTPLEDRPLKSVYGDTDSLFVTERGHRLMETRGKKRIKKHGGNLVFDPERPELTWLVECETVCGACGADAYSPESVFLAPKLYALKSLHCPSCGASSKGKLRAKGHAAEGLDYDTMVKCYLADAQGEDRQRFSTSRTSLKRTLASAQPGAHPFTVTQTTLTRTLRPWKDMTLARLDEHRLLPYSESRPNPRNEEICWIEMP</sequence>
<feature type="chain" id="PRO_0000046494" description="DNA polymerase">
    <location>
        <begin position="1"/>
        <end position="1198"/>
    </location>
</feature>
<feature type="region of interest" description="Disordered" evidence="3">
    <location>
        <begin position="1"/>
        <end position="87"/>
    </location>
</feature>
<feature type="region of interest" description="Disordered" evidence="3">
    <location>
        <begin position="179"/>
        <end position="199"/>
    </location>
</feature>
<feature type="region of interest" description="Disordered" evidence="3">
    <location>
        <begin position="904"/>
        <end position="930"/>
    </location>
</feature>
<feature type="compositionally biased region" description="Low complexity" evidence="3">
    <location>
        <begin position="30"/>
        <end position="40"/>
    </location>
</feature>
<feature type="compositionally biased region" description="Low complexity" evidence="3">
    <location>
        <begin position="57"/>
        <end position="68"/>
    </location>
</feature>
<dbReference type="EC" id="2.7.7.7" evidence="2"/>
<dbReference type="EMBL" id="X02996">
    <property type="protein sequence ID" value="CAA26749.1"/>
    <property type="status" value="ALT_SEQ"/>
    <property type="molecule type" value="Genomic_DNA"/>
</dbReference>
<dbReference type="EMBL" id="M73260">
    <property type="status" value="NOT_ANNOTATED_CDS"/>
    <property type="molecule type" value="Genomic_DNA"/>
</dbReference>
<dbReference type="EMBL" id="AY601635">
    <property type="protein sequence ID" value="AAW65499.1"/>
    <property type="molecule type" value="Genomic_DNA"/>
</dbReference>
<dbReference type="PIR" id="A00712">
    <property type="entry name" value="DJAD51"/>
</dbReference>
<dbReference type="Proteomes" id="UP000004992">
    <property type="component" value="Genome"/>
</dbReference>
<dbReference type="Proteomes" id="UP000125273">
    <property type="component" value="Genome"/>
</dbReference>
<dbReference type="GO" id="GO:0042025">
    <property type="term" value="C:host cell nucleus"/>
    <property type="evidence" value="ECO:0000314"/>
    <property type="project" value="UniProtKB"/>
</dbReference>
<dbReference type="GO" id="GO:0008408">
    <property type="term" value="F:3'-5' exonuclease activity"/>
    <property type="evidence" value="ECO:0000314"/>
    <property type="project" value="UniProtKB"/>
</dbReference>
<dbReference type="GO" id="GO:0003677">
    <property type="term" value="F:DNA binding"/>
    <property type="evidence" value="ECO:0007669"/>
    <property type="project" value="UniProtKB-UniRule"/>
</dbReference>
<dbReference type="GO" id="GO:0003887">
    <property type="term" value="F:DNA-directed DNA polymerase activity"/>
    <property type="evidence" value="ECO:0007669"/>
    <property type="project" value="UniProtKB-UniRule"/>
</dbReference>
<dbReference type="GO" id="GO:0000166">
    <property type="term" value="F:nucleotide binding"/>
    <property type="evidence" value="ECO:0007669"/>
    <property type="project" value="UniProtKB-UniRule"/>
</dbReference>
<dbReference type="GO" id="GO:0006261">
    <property type="term" value="P:DNA-templated DNA replication"/>
    <property type="evidence" value="ECO:0000314"/>
    <property type="project" value="UniProtKB"/>
</dbReference>
<dbReference type="GO" id="GO:0039693">
    <property type="term" value="P:viral DNA genome replication"/>
    <property type="evidence" value="ECO:0000314"/>
    <property type="project" value="UniProtKB"/>
</dbReference>
<dbReference type="HAMAP" id="MF_04055">
    <property type="entry name" value="ADV_DPOL"/>
    <property type="match status" value="1"/>
</dbReference>
<dbReference type="InterPro" id="IPR006172">
    <property type="entry name" value="DNA-dir_DNA_pol_B"/>
</dbReference>
<dbReference type="InterPro" id="IPR014382">
    <property type="entry name" value="DNA-dir_DNA_pol_B_adenovir"/>
</dbReference>
<dbReference type="InterPro" id="IPR017964">
    <property type="entry name" value="DNA-dir_DNA_pol_B_CS"/>
</dbReference>
<dbReference type="InterPro" id="IPR004868">
    <property type="entry name" value="DNA-dir_DNA_pol_B_mt/vir"/>
</dbReference>
<dbReference type="InterPro" id="IPR043502">
    <property type="entry name" value="DNA/RNA_pol_sf"/>
</dbReference>
<dbReference type="InterPro" id="IPR012337">
    <property type="entry name" value="RNaseH-like_sf"/>
</dbReference>
<dbReference type="Pfam" id="PF03175">
    <property type="entry name" value="DNA_pol_B_2"/>
    <property type="match status" value="1"/>
</dbReference>
<dbReference type="PIRSF" id="PIRSF000788">
    <property type="entry name" value="DPol_ADV"/>
    <property type="match status" value="1"/>
</dbReference>
<dbReference type="PRINTS" id="PR00106">
    <property type="entry name" value="DNAPOLB"/>
</dbReference>
<dbReference type="SMART" id="SM00486">
    <property type="entry name" value="POLBc"/>
    <property type="match status" value="1"/>
</dbReference>
<dbReference type="SUPFAM" id="SSF56672">
    <property type="entry name" value="DNA/RNA polymerases"/>
    <property type="match status" value="1"/>
</dbReference>
<dbReference type="SUPFAM" id="SSF53098">
    <property type="entry name" value="Ribonuclease H-like"/>
    <property type="match status" value="1"/>
</dbReference>
<dbReference type="PROSITE" id="PS00116">
    <property type="entry name" value="DNA_POLYMERASE_B"/>
    <property type="match status" value="1"/>
</dbReference>
<comment type="function">
    <text evidence="2 4 5">Eukaryotic-type DNA polymerase involved in viral genomic replication. DNA synthesis is protein primed, and acts in a strand displacement replication. Assembles in complex with viral pTP, DBP, host NFIA and host POU2F1/OCT1 on viral origin of replication. The polymerase covalently transfers dCMP onto pTP, thereby initiating complementary strand synthesis.</text>
</comment>
<comment type="catalytic activity">
    <reaction evidence="2">
        <text>DNA(n) + a 2'-deoxyribonucleoside 5'-triphosphate = DNA(n+1) + diphosphate</text>
        <dbReference type="Rhea" id="RHEA:22508"/>
        <dbReference type="Rhea" id="RHEA-COMP:17339"/>
        <dbReference type="Rhea" id="RHEA-COMP:17340"/>
        <dbReference type="ChEBI" id="CHEBI:33019"/>
        <dbReference type="ChEBI" id="CHEBI:61560"/>
        <dbReference type="ChEBI" id="CHEBI:173112"/>
        <dbReference type="EC" id="2.7.7.7"/>
    </reaction>
</comment>
<comment type="subunit">
    <text evidence="2 5 6 8">Heterodimer with the terminal protein; this heterodimer binds to bp 9 to 18 of the genome (PubMed:15273278). Forms a complex with viral pTP, DBP and hosts NFIA and POU2F1/OCT1 for initiation of replication (PubMed:12747549, PubMed:2211726).</text>
</comment>
<comment type="subcellular location">
    <subcellularLocation>
        <location evidence="1 2">Host nucleus</location>
    </subcellularLocation>
</comment>
<comment type="miscellaneous">
    <text evidence="2">This DNA polymerase requires a protein as a primer.</text>
</comment>
<comment type="similarity">
    <text evidence="2 7">Belongs to the DNA polymerase type-B family.</text>
</comment>
<comment type="sequence caution" evidence="7">
    <conflict type="erroneous gene model prediction">
        <sequence resource="EMBL-CDS" id="CAA26749"/>
    </conflict>
</comment>